<dbReference type="EMBL" id="FM177140">
    <property type="protein sequence ID" value="CAQ67752.1"/>
    <property type="molecule type" value="Genomic_DNA"/>
</dbReference>
<dbReference type="SMR" id="B3WAN3"/>
<dbReference type="KEGG" id="lcb:LCABL_27010"/>
<dbReference type="HOGENOM" id="CLU_054493_1_0_9"/>
<dbReference type="GO" id="GO:0005737">
    <property type="term" value="C:cytoplasm"/>
    <property type="evidence" value="ECO:0007669"/>
    <property type="project" value="UniProtKB-SubCell"/>
</dbReference>
<dbReference type="GO" id="GO:0044183">
    <property type="term" value="F:protein folding chaperone"/>
    <property type="evidence" value="ECO:0007669"/>
    <property type="project" value="TreeGrafter"/>
</dbReference>
<dbReference type="GO" id="GO:0051082">
    <property type="term" value="F:unfolded protein binding"/>
    <property type="evidence" value="ECO:0007669"/>
    <property type="project" value="UniProtKB-UniRule"/>
</dbReference>
<dbReference type="GO" id="GO:0042026">
    <property type="term" value="P:protein refolding"/>
    <property type="evidence" value="ECO:0007669"/>
    <property type="project" value="TreeGrafter"/>
</dbReference>
<dbReference type="CDD" id="cd00498">
    <property type="entry name" value="Hsp33"/>
    <property type="match status" value="1"/>
</dbReference>
<dbReference type="Gene3D" id="3.55.30.10">
    <property type="entry name" value="Hsp33 domain"/>
    <property type="match status" value="1"/>
</dbReference>
<dbReference type="Gene3D" id="3.90.1280.10">
    <property type="entry name" value="HSP33 redox switch-like"/>
    <property type="match status" value="1"/>
</dbReference>
<dbReference type="HAMAP" id="MF_00117">
    <property type="entry name" value="HslO"/>
    <property type="match status" value="1"/>
</dbReference>
<dbReference type="InterPro" id="IPR000397">
    <property type="entry name" value="Heat_shock_Hsp33"/>
</dbReference>
<dbReference type="InterPro" id="IPR016154">
    <property type="entry name" value="Heat_shock_Hsp33_C"/>
</dbReference>
<dbReference type="InterPro" id="IPR016153">
    <property type="entry name" value="Heat_shock_Hsp33_N"/>
</dbReference>
<dbReference type="NCBIfam" id="NF001033">
    <property type="entry name" value="PRK00114.1"/>
    <property type="match status" value="1"/>
</dbReference>
<dbReference type="PANTHER" id="PTHR30111">
    <property type="entry name" value="33 KDA CHAPERONIN"/>
    <property type="match status" value="1"/>
</dbReference>
<dbReference type="PANTHER" id="PTHR30111:SF1">
    <property type="entry name" value="33 KDA CHAPERONIN"/>
    <property type="match status" value="1"/>
</dbReference>
<dbReference type="Pfam" id="PF01430">
    <property type="entry name" value="HSP33"/>
    <property type="match status" value="1"/>
</dbReference>
<dbReference type="PIRSF" id="PIRSF005261">
    <property type="entry name" value="Heat_shock_Hsp33"/>
    <property type="match status" value="1"/>
</dbReference>
<dbReference type="SUPFAM" id="SSF64397">
    <property type="entry name" value="Hsp33 domain"/>
    <property type="match status" value="1"/>
</dbReference>
<dbReference type="SUPFAM" id="SSF118352">
    <property type="entry name" value="HSP33 redox switch-like"/>
    <property type="match status" value="1"/>
</dbReference>
<gene>
    <name evidence="1" type="primary">hslO</name>
    <name type="ordered locus">LCABL_27010</name>
</gene>
<sequence length="294" mass="31366">MSDYIASALSRDEHFRIFAADATQTVREAQRRHDTWSASSAALGRTLVATALLAASGLKNADDMLTVRIKGDGPVGALVTDGTNVGTVRGYVEEPHVNLPLNLVGKIDVARAVGKRGLLAVTKDIGVGDPFTGQVPLVSGELAEDFTYYLAKSEQIPAAVGLSVFVNADNTIQVAGGFMLQALPGANDAELSELEANVKTLPLVSELLKSGLTPEQIIQRIAGDEPVQFLDAQPLKFACNCSKEHFGDIMATLPHAQLQEMIDQDGGAETTCKFCGNQYHYSVADLEALMARHE</sequence>
<protein>
    <recommendedName>
        <fullName evidence="1">33 kDa chaperonin</fullName>
    </recommendedName>
    <alternativeName>
        <fullName evidence="1">Heat shock protein 33 homolog</fullName>
        <shortName evidence="1">HSP33</shortName>
    </alternativeName>
</protein>
<name>HSLO_LACCB</name>
<reference key="1">
    <citation type="submission" date="2008-06" db="EMBL/GenBank/DDBJ databases">
        <title>Lactobacillus casei BL23 complete genome sequence.</title>
        <authorList>
            <person name="Maze A."/>
            <person name="Boel G."/>
            <person name="Bourand A."/>
            <person name="Loux V."/>
            <person name="Gibrat J.F."/>
            <person name="Zuniga M."/>
            <person name="Hartke A."/>
            <person name="Deutscher J."/>
        </authorList>
    </citation>
    <scope>NUCLEOTIDE SEQUENCE [LARGE SCALE GENOMIC DNA]</scope>
    <source>
        <strain>BL23</strain>
    </source>
</reference>
<comment type="function">
    <text evidence="1">Redox regulated molecular chaperone. Protects both thermally unfolding and oxidatively damaged proteins from irreversible aggregation. Plays an important role in the bacterial defense system toward oxidative stress.</text>
</comment>
<comment type="subcellular location">
    <subcellularLocation>
        <location evidence="1">Cytoplasm</location>
    </subcellularLocation>
</comment>
<comment type="PTM">
    <text evidence="1">Under oxidizing conditions two disulfide bonds are formed involving the reactive cysteines. Under reducing conditions zinc is bound to the reactive cysteines and the protein is inactive.</text>
</comment>
<comment type="similarity">
    <text evidence="1">Belongs to the HSP33 family.</text>
</comment>
<organism>
    <name type="scientific">Lacticaseibacillus casei (strain BL23)</name>
    <name type="common">Lactobacillus casei</name>
    <dbReference type="NCBI Taxonomy" id="543734"/>
    <lineage>
        <taxon>Bacteria</taxon>
        <taxon>Bacillati</taxon>
        <taxon>Bacillota</taxon>
        <taxon>Bacilli</taxon>
        <taxon>Lactobacillales</taxon>
        <taxon>Lactobacillaceae</taxon>
        <taxon>Lacticaseibacillus</taxon>
    </lineage>
</organism>
<evidence type="ECO:0000255" key="1">
    <source>
        <dbReference type="HAMAP-Rule" id="MF_00117"/>
    </source>
</evidence>
<keyword id="KW-0143">Chaperone</keyword>
<keyword id="KW-0963">Cytoplasm</keyword>
<keyword id="KW-1015">Disulfide bond</keyword>
<keyword id="KW-0676">Redox-active center</keyword>
<keyword id="KW-0346">Stress response</keyword>
<keyword id="KW-0862">Zinc</keyword>
<proteinExistence type="inferred from homology"/>
<feature type="chain" id="PRO_1000095021" description="33 kDa chaperonin">
    <location>
        <begin position="1"/>
        <end position="294"/>
    </location>
</feature>
<feature type="disulfide bond" description="Redox-active" evidence="1">
    <location>
        <begin position="239"/>
        <end position="241"/>
    </location>
</feature>
<feature type="disulfide bond" description="Redox-active" evidence="1">
    <location>
        <begin position="272"/>
        <end position="275"/>
    </location>
</feature>
<accession>B3WAN3</accession>